<organism>
    <name type="scientific">Shewanella pealeana (strain ATCC 700345 / ANG-SQ1)</name>
    <dbReference type="NCBI Taxonomy" id="398579"/>
    <lineage>
        <taxon>Bacteria</taxon>
        <taxon>Pseudomonadati</taxon>
        <taxon>Pseudomonadota</taxon>
        <taxon>Gammaproteobacteria</taxon>
        <taxon>Alteromonadales</taxon>
        <taxon>Shewanellaceae</taxon>
        <taxon>Shewanella</taxon>
    </lineage>
</organism>
<reference key="1">
    <citation type="submission" date="2007-10" db="EMBL/GenBank/DDBJ databases">
        <title>Complete sequence of Shewanella pealeana ATCC 700345.</title>
        <authorList>
            <consortium name="US DOE Joint Genome Institute"/>
            <person name="Copeland A."/>
            <person name="Lucas S."/>
            <person name="Lapidus A."/>
            <person name="Barry K."/>
            <person name="Glavina del Rio T."/>
            <person name="Dalin E."/>
            <person name="Tice H."/>
            <person name="Pitluck S."/>
            <person name="Chertkov O."/>
            <person name="Brettin T."/>
            <person name="Bruce D."/>
            <person name="Detter J.C."/>
            <person name="Han C."/>
            <person name="Schmutz J."/>
            <person name="Larimer F."/>
            <person name="Land M."/>
            <person name="Hauser L."/>
            <person name="Kyrpides N."/>
            <person name="Kim E."/>
            <person name="Zhao J.-S.Z."/>
            <person name="Manno D."/>
            <person name="Hawari J."/>
            <person name="Richardson P."/>
        </authorList>
    </citation>
    <scope>NUCLEOTIDE SEQUENCE [LARGE SCALE GENOMIC DNA]</scope>
    <source>
        <strain>ATCC 700345 / ANG-SQ1</strain>
    </source>
</reference>
<protein>
    <recommendedName>
        <fullName evidence="1">Nucleotide-binding protein Spea_3114</fullName>
    </recommendedName>
</protein>
<dbReference type="EMBL" id="CP000851">
    <property type="protein sequence ID" value="ABV88430.1"/>
    <property type="molecule type" value="Genomic_DNA"/>
</dbReference>
<dbReference type="RefSeq" id="WP_012156332.1">
    <property type="nucleotide sequence ID" value="NC_009901.1"/>
</dbReference>
<dbReference type="SMR" id="A8H793"/>
<dbReference type="STRING" id="398579.Spea_3114"/>
<dbReference type="KEGG" id="spl:Spea_3114"/>
<dbReference type="eggNOG" id="COG1666">
    <property type="taxonomic scope" value="Bacteria"/>
</dbReference>
<dbReference type="HOGENOM" id="CLU_099839_1_0_6"/>
<dbReference type="OrthoDB" id="9801447at2"/>
<dbReference type="Proteomes" id="UP000002608">
    <property type="component" value="Chromosome"/>
</dbReference>
<dbReference type="GO" id="GO:0005829">
    <property type="term" value="C:cytosol"/>
    <property type="evidence" value="ECO:0007669"/>
    <property type="project" value="TreeGrafter"/>
</dbReference>
<dbReference type="GO" id="GO:0000166">
    <property type="term" value="F:nucleotide binding"/>
    <property type="evidence" value="ECO:0007669"/>
    <property type="project" value="TreeGrafter"/>
</dbReference>
<dbReference type="CDD" id="cd11740">
    <property type="entry name" value="YajQ_like"/>
    <property type="match status" value="1"/>
</dbReference>
<dbReference type="FunFam" id="3.30.70.860:FF:000001">
    <property type="entry name" value="UPF0234 protein YajQ"/>
    <property type="match status" value="1"/>
</dbReference>
<dbReference type="Gene3D" id="3.30.70.860">
    <property type="match status" value="1"/>
</dbReference>
<dbReference type="Gene3D" id="3.30.70.990">
    <property type="entry name" value="YajQ-like, domain 2"/>
    <property type="match status" value="1"/>
</dbReference>
<dbReference type="HAMAP" id="MF_00632">
    <property type="entry name" value="YajQ"/>
    <property type="match status" value="1"/>
</dbReference>
<dbReference type="InterPro" id="IPR007551">
    <property type="entry name" value="DUF520"/>
</dbReference>
<dbReference type="InterPro" id="IPR035571">
    <property type="entry name" value="UPF0234-like_C"/>
</dbReference>
<dbReference type="InterPro" id="IPR035570">
    <property type="entry name" value="UPF0234_N"/>
</dbReference>
<dbReference type="InterPro" id="IPR036183">
    <property type="entry name" value="YajQ-like_sf"/>
</dbReference>
<dbReference type="NCBIfam" id="NF003819">
    <property type="entry name" value="PRK05412.1"/>
    <property type="match status" value="1"/>
</dbReference>
<dbReference type="PANTHER" id="PTHR30476">
    <property type="entry name" value="UPF0234 PROTEIN YAJQ"/>
    <property type="match status" value="1"/>
</dbReference>
<dbReference type="PANTHER" id="PTHR30476:SF0">
    <property type="entry name" value="UPF0234 PROTEIN YAJQ"/>
    <property type="match status" value="1"/>
</dbReference>
<dbReference type="Pfam" id="PF04461">
    <property type="entry name" value="DUF520"/>
    <property type="match status" value="1"/>
</dbReference>
<dbReference type="SUPFAM" id="SSF89963">
    <property type="entry name" value="YajQ-like"/>
    <property type="match status" value="2"/>
</dbReference>
<proteinExistence type="inferred from homology"/>
<accession>A8H793</accession>
<gene>
    <name type="ordered locus">Spea_3114</name>
</gene>
<keyword id="KW-0547">Nucleotide-binding</keyword>
<keyword id="KW-1185">Reference proteome</keyword>
<name>Y3114_SHEPA</name>
<comment type="function">
    <text evidence="1">Nucleotide-binding protein.</text>
</comment>
<comment type="similarity">
    <text evidence="1">Belongs to the YajQ family.</text>
</comment>
<feature type="chain" id="PRO_1000082635" description="Nucleotide-binding protein Spea_3114">
    <location>
        <begin position="1"/>
        <end position="161"/>
    </location>
</feature>
<sequence length="161" mass="18421">MPSMDIVSEVNEVELRNAVDNSVRELKGRFDFRGKEASIEYKDHVVTLTAEDDFQCRQLVDILRMQMSKRDVDPKSMDVDDKAVHSGKTFSLKVKFKEGIETLVAKKLVKLIKDSKLKVQVSIQGDSVRVTGKKRDDLQQVMALARESELGQPFQFNNFRD</sequence>
<evidence type="ECO:0000255" key="1">
    <source>
        <dbReference type="HAMAP-Rule" id="MF_00632"/>
    </source>
</evidence>